<keyword id="KW-0067">ATP-binding</keyword>
<keyword id="KW-0175">Coiled coil</keyword>
<keyword id="KW-0433">Leucine-rich repeat</keyword>
<keyword id="KW-0547">Nucleotide-binding</keyword>
<keyword id="KW-0611">Plant defense</keyword>
<keyword id="KW-1185">Reference proteome</keyword>
<keyword id="KW-0677">Repeat</keyword>
<accession>Q9LRR4</accession>
<evidence type="ECO:0000250" key="1"/>
<evidence type="ECO:0000255" key="2"/>
<evidence type="ECO:0000256" key="3">
    <source>
        <dbReference type="SAM" id="MobiDB-lite"/>
    </source>
</evidence>
<evidence type="ECO:0000305" key="4"/>
<name>R13L1_ARATH</name>
<sequence>MTGIGEMFLAAFLQALFQTLVSEPFRSFFKRRELNENLLERLSTALLTITAVLIDAEEKQITNPVVEKWVNELRDVVYHAEDALDDIATEALRLNIGAESSSSNRLRQLRGRMSLGDFLDGNSEHLETRLEKVTIRLERLASQRNILGLKELTAMIPKQRLPTTSLVDESEVFGRDDDKDEIMRFLIPENGKDNGITVVAIVGIGGVGKTTLSQLLYNDQHVRSYFGTKVWAHVSEEFDVFKITKKVYESVTSRPCEFTDLDVLQVKLKERLTGTGLPFLLVLDDLWNENFADWDLLRQPFIHAAQGSQILVTTRSQRVASIMCAVHVHNLQPLSDGDCWSLFMKTVFGNQEPCLNREIGDLAERIVHKCRGLPLAVKTLGGVLRFEGKVIEWERVLSSRIWDLPADKSNLLPVLRVSYYYLPAHLKRCFAYCSIFPKGHAFEKDKVVLLWMAEGFLQQTRSSKNLEELGNEYFSELESRSLLQKTKTRYIMHDFINELAQFASGEFSSKFEDGCKLQVSERTRYLSYLRDNYAEPMEFEALREVKFLRTFLPLSLTNSSRSCCLDQMVSEKLLPTLTRLRVLSLSHYKIARLPPDFFKNISHARFLDLSRTELEKLPKSLCYMYNLQTLLLSYCSSLKELPTDISNLINLRYLDLIGTKLRQMPRRFGRLKSLQTLTTFFVSASDGSRISELGGLHDLHGKLKIVELQRVVDVADAAEANLNSKKHLREIDFVWRTGSSSSENNTNPHRTQNEAEVFEKLRPHRHIEKLAIERYKGRRFPDWLSDPSFSRIVCIRLRECQYCTSLPSLGQLPCLKELHISGMVGLQSIGRKFYFSDQQLRDQDQQPFRSLETLRFDNLPDWQEWLDVRVTRGDLFPSLKKLFILRCPELTGTLPTFLPSLISLHIYKCGLLDFQPDHHEYSYRNLQTLSIKSSCDTLVKFPLNHFANLDKLEVDQCTSLYSLELSNEHLRGPNALRNLRINDCQNLQLLPKLNALPQNLQVTITNCRYLRQPMEQQPQYHHPQFHLPRSNVSGSPKSHGSHRSYDSRSSSRYD</sequence>
<feature type="chain" id="PRO_0000212726" description="Putative disease resistance RPP13-like protein 1">
    <location>
        <begin position="1"/>
        <end position="1054"/>
    </location>
</feature>
<feature type="domain" description="NB-ARC">
    <location>
        <begin position="152"/>
        <end position="462"/>
    </location>
</feature>
<feature type="repeat" description="LRR 1">
    <location>
        <begin position="579"/>
        <end position="600"/>
    </location>
</feature>
<feature type="repeat" description="LRR 2">
    <location>
        <begin position="603"/>
        <end position="624"/>
    </location>
</feature>
<feature type="repeat" description="LRR 3">
    <location>
        <begin position="626"/>
        <end position="648"/>
    </location>
</feature>
<feature type="repeat" description="LRR 4">
    <location>
        <begin position="650"/>
        <end position="672"/>
    </location>
</feature>
<feature type="repeat" description="LRR 5">
    <location>
        <begin position="676"/>
        <end position="697"/>
    </location>
</feature>
<feature type="region of interest" description="Leucine-zipper 1">
    <location>
        <begin position="9"/>
        <end position="20"/>
    </location>
</feature>
<feature type="region of interest" description="Leucine-zipper 2">
    <location>
        <begin position="39"/>
        <end position="53"/>
    </location>
</feature>
<feature type="region of interest" description="Disordered" evidence="3">
    <location>
        <begin position="1018"/>
        <end position="1054"/>
    </location>
</feature>
<feature type="coiled-coil region" evidence="2">
    <location>
        <begin position="117"/>
        <end position="147"/>
    </location>
</feature>
<feature type="compositionally biased region" description="Basic and acidic residues" evidence="3">
    <location>
        <begin position="1043"/>
        <end position="1054"/>
    </location>
</feature>
<feature type="binding site" evidence="2">
    <location>
        <begin position="203"/>
        <end position="210"/>
    </location>
    <ligand>
        <name>ATP</name>
        <dbReference type="ChEBI" id="CHEBI:30616"/>
    </ligand>
</feature>
<dbReference type="EMBL" id="AB028617">
    <property type="protein sequence ID" value="BAB01339.1"/>
    <property type="molecule type" value="Genomic_DNA"/>
</dbReference>
<dbReference type="EMBL" id="CP002686">
    <property type="protein sequence ID" value="AEE75530.1"/>
    <property type="molecule type" value="Genomic_DNA"/>
</dbReference>
<dbReference type="EMBL" id="CP002686">
    <property type="protein sequence ID" value="ANM64509.1"/>
    <property type="molecule type" value="Genomic_DNA"/>
</dbReference>
<dbReference type="RefSeq" id="NP_001319549.1">
    <property type="nucleotide sequence ID" value="NM_001338120.1"/>
</dbReference>
<dbReference type="RefSeq" id="NP_188065.1">
    <property type="nucleotide sequence ID" value="NM_112307.3"/>
</dbReference>
<dbReference type="SMR" id="Q9LRR4"/>
<dbReference type="BioGRID" id="6004">
    <property type="interactions" value="1"/>
</dbReference>
<dbReference type="FunCoup" id="Q9LRR4">
    <property type="interactions" value="377"/>
</dbReference>
<dbReference type="IntAct" id="Q9LRR4">
    <property type="interactions" value="1"/>
</dbReference>
<dbReference type="STRING" id="3702.Q9LRR4"/>
<dbReference type="PaxDb" id="3702-AT3G14470.1"/>
<dbReference type="ProteomicsDB" id="236479"/>
<dbReference type="EnsemblPlants" id="AT3G14470.1">
    <property type="protein sequence ID" value="AT3G14470.1"/>
    <property type="gene ID" value="AT3G14470"/>
</dbReference>
<dbReference type="EnsemblPlants" id="AT3G14470.2">
    <property type="protein sequence ID" value="AT3G14470.2"/>
    <property type="gene ID" value="AT3G14470"/>
</dbReference>
<dbReference type="GeneID" id="820670"/>
<dbReference type="Gramene" id="AT3G14470.1">
    <property type="protein sequence ID" value="AT3G14470.1"/>
    <property type="gene ID" value="AT3G14470"/>
</dbReference>
<dbReference type="Gramene" id="AT3G14470.2">
    <property type="protein sequence ID" value="AT3G14470.2"/>
    <property type="gene ID" value="AT3G14470"/>
</dbReference>
<dbReference type="KEGG" id="ath:AT3G14470"/>
<dbReference type="Araport" id="AT3G14470"/>
<dbReference type="TAIR" id="AT3G14470"/>
<dbReference type="eggNOG" id="KOG4658">
    <property type="taxonomic scope" value="Eukaryota"/>
</dbReference>
<dbReference type="HOGENOM" id="CLU_000837_8_8_1"/>
<dbReference type="InParanoid" id="Q9LRR4"/>
<dbReference type="OMA" id="KSLCYMY"/>
<dbReference type="PhylomeDB" id="Q9LRR4"/>
<dbReference type="PRO" id="PR:Q9LRR4"/>
<dbReference type="Proteomes" id="UP000006548">
    <property type="component" value="Chromosome 3"/>
</dbReference>
<dbReference type="ExpressionAtlas" id="Q9LRR4">
    <property type="expression patterns" value="baseline and differential"/>
</dbReference>
<dbReference type="GO" id="GO:0043531">
    <property type="term" value="F:ADP binding"/>
    <property type="evidence" value="ECO:0007669"/>
    <property type="project" value="InterPro"/>
</dbReference>
<dbReference type="GO" id="GO:0005524">
    <property type="term" value="F:ATP binding"/>
    <property type="evidence" value="ECO:0007669"/>
    <property type="project" value="UniProtKB-KW"/>
</dbReference>
<dbReference type="GO" id="GO:0098542">
    <property type="term" value="P:defense response to other organism"/>
    <property type="evidence" value="ECO:0007669"/>
    <property type="project" value="UniProtKB-ARBA"/>
</dbReference>
<dbReference type="FunFam" id="1.10.10.10:FF:000322">
    <property type="entry name" value="Probable disease resistance protein At1g63360"/>
    <property type="match status" value="1"/>
</dbReference>
<dbReference type="Gene3D" id="1.20.5.4130">
    <property type="match status" value="1"/>
</dbReference>
<dbReference type="Gene3D" id="1.10.8.430">
    <property type="entry name" value="Helical domain of apoptotic protease-activating factors"/>
    <property type="match status" value="1"/>
</dbReference>
<dbReference type="Gene3D" id="3.40.50.300">
    <property type="entry name" value="P-loop containing nucleotide triphosphate hydrolases"/>
    <property type="match status" value="1"/>
</dbReference>
<dbReference type="Gene3D" id="3.80.10.10">
    <property type="entry name" value="Ribonuclease Inhibitor"/>
    <property type="match status" value="2"/>
</dbReference>
<dbReference type="Gene3D" id="1.10.10.10">
    <property type="entry name" value="Winged helix-like DNA-binding domain superfamily/Winged helix DNA-binding domain"/>
    <property type="match status" value="1"/>
</dbReference>
<dbReference type="InterPro" id="IPR042197">
    <property type="entry name" value="Apaf_helical"/>
</dbReference>
<dbReference type="InterPro" id="IPR001611">
    <property type="entry name" value="Leu-rich_rpt"/>
</dbReference>
<dbReference type="InterPro" id="IPR003591">
    <property type="entry name" value="Leu-rich_rpt_typical-subtyp"/>
</dbReference>
<dbReference type="InterPro" id="IPR032675">
    <property type="entry name" value="LRR_dom_sf"/>
</dbReference>
<dbReference type="InterPro" id="IPR056789">
    <property type="entry name" value="LRR_R13L1-DRL21"/>
</dbReference>
<dbReference type="InterPro" id="IPR002182">
    <property type="entry name" value="NB-ARC"/>
</dbReference>
<dbReference type="InterPro" id="IPR027417">
    <property type="entry name" value="P-loop_NTPase"/>
</dbReference>
<dbReference type="InterPro" id="IPR041118">
    <property type="entry name" value="Rx_N"/>
</dbReference>
<dbReference type="InterPro" id="IPR036388">
    <property type="entry name" value="WH-like_DNA-bd_sf"/>
</dbReference>
<dbReference type="PANTHER" id="PTHR36766:SF51">
    <property type="entry name" value="DISEASE RESISTANCE RPP13-LIKE PROTEIN 1"/>
    <property type="match status" value="1"/>
</dbReference>
<dbReference type="PANTHER" id="PTHR36766">
    <property type="entry name" value="PLANT BROAD-SPECTRUM MILDEW RESISTANCE PROTEIN RPW8"/>
    <property type="match status" value="1"/>
</dbReference>
<dbReference type="Pfam" id="PF13855">
    <property type="entry name" value="LRR_8"/>
    <property type="match status" value="1"/>
</dbReference>
<dbReference type="Pfam" id="PF25019">
    <property type="entry name" value="LRR_R13L1-DRL21"/>
    <property type="match status" value="1"/>
</dbReference>
<dbReference type="Pfam" id="PF00931">
    <property type="entry name" value="NB-ARC"/>
    <property type="match status" value="1"/>
</dbReference>
<dbReference type="Pfam" id="PF18052">
    <property type="entry name" value="Rx_N"/>
    <property type="match status" value="1"/>
</dbReference>
<dbReference type="Pfam" id="PF23559">
    <property type="entry name" value="WH_DRP"/>
    <property type="match status" value="1"/>
</dbReference>
<dbReference type="PRINTS" id="PR00364">
    <property type="entry name" value="DISEASERSIST"/>
</dbReference>
<dbReference type="SMART" id="SM00369">
    <property type="entry name" value="LRR_TYP"/>
    <property type="match status" value="2"/>
</dbReference>
<dbReference type="SUPFAM" id="SSF52058">
    <property type="entry name" value="L domain-like"/>
    <property type="match status" value="1"/>
</dbReference>
<dbReference type="SUPFAM" id="SSF52540">
    <property type="entry name" value="P-loop containing nucleoside triphosphate hydrolases"/>
    <property type="match status" value="1"/>
</dbReference>
<protein>
    <recommendedName>
        <fullName>Putative disease resistance RPP13-like protein 1</fullName>
    </recommendedName>
</protein>
<organism>
    <name type="scientific">Arabidopsis thaliana</name>
    <name type="common">Mouse-ear cress</name>
    <dbReference type="NCBI Taxonomy" id="3702"/>
    <lineage>
        <taxon>Eukaryota</taxon>
        <taxon>Viridiplantae</taxon>
        <taxon>Streptophyta</taxon>
        <taxon>Embryophyta</taxon>
        <taxon>Tracheophyta</taxon>
        <taxon>Spermatophyta</taxon>
        <taxon>Magnoliopsida</taxon>
        <taxon>eudicotyledons</taxon>
        <taxon>Gunneridae</taxon>
        <taxon>Pentapetalae</taxon>
        <taxon>rosids</taxon>
        <taxon>malvids</taxon>
        <taxon>Brassicales</taxon>
        <taxon>Brassicaceae</taxon>
        <taxon>Camelineae</taxon>
        <taxon>Arabidopsis</taxon>
    </lineage>
</organism>
<reference key="1">
    <citation type="journal article" date="2000" name="DNA Res.">
        <title>Structural analysis of Arabidopsis thaliana chromosome 3. I. Sequence features of the regions of 4,504,864 bp covered by sixty P1 and TAC clones.</title>
        <authorList>
            <person name="Sato S."/>
            <person name="Nakamura Y."/>
            <person name="Kaneko T."/>
            <person name="Katoh T."/>
            <person name="Asamizu E."/>
            <person name="Tabata S."/>
        </authorList>
    </citation>
    <scope>NUCLEOTIDE SEQUENCE [LARGE SCALE GENOMIC DNA]</scope>
    <source>
        <strain>cv. Columbia</strain>
    </source>
</reference>
<reference key="2">
    <citation type="journal article" date="2017" name="Plant J.">
        <title>Araport11: a complete reannotation of the Arabidopsis thaliana reference genome.</title>
        <authorList>
            <person name="Cheng C.Y."/>
            <person name="Krishnakumar V."/>
            <person name="Chan A.P."/>
            <person name="Thibaud-Nissen F."/>
            <person name="Schobel S."/>
            <person name="Town C.D."/>
        </authorList>
    </citation>
    <scope>GENOME REANNOTATION</scope>
    <source>
        <strain>cv. Columbia</strain>
    </source>
</reference>
<gene>
    <name type="primary">RPPL1</name>
    <name type="ordered locus">At3g14470</name>
    <name type="ORF">MOA2.9</name>
</gene>
<comment type="function">
    <text>Potential disease resistance protein.</text>
</comment>
<comment type="domain">
    <text evidence="1">The LRR repeats probably act as specificity determinant of pathogen recognition.</text>
</comment>
<comment type="similarity">
    <text evidence="4">Belongs to the disease resistance NB-LRR family. RPP13 subfamily.</text>
</comment>
<comment type="online information" name="NIB-LRRS">
    <link uri="http://niblrrs.ucdavis.edu"/>
    <text>Functional and comparative genomics of disease resistance gene homologs</text>
</comment>
<proteinExistence type="inferred from homology"/>